<comment type="function">
    <text evidence="1">Catalyzes the cleavage of cystathionine to homocysteine, pyruvate and ammonia during methionine biosynthesis.</text>
</comment>
<comment type="catalytic activity">
    <reaction evidence="1">
        <text>L,L-cystathionine + H2O = L-homocysteine + pyruvate + NH4(+)</text>
        <dbReference type="Rhea" id="RHEA:13965"/>
        <dbReference type="ChEBI" id="CHEBI:15361"/>
        <dbReference type="ChEBI" id="CHEBI:15377"/>
        <dbReference type="ChEBI" id="CHEBI:28938"/>
        <dbReference type="ChEBI" id="CHEBI:58161"/>
        <dbReference type="ChEBI" id="CHEBI:58199"/>
    </reaction>
</comment>
<comment type="catalytic activity">
    <reaction evidence="1">
        <text>an S-substituted L-cysteine + H2O = a thiol + pyruvate + NH4(+)</text>
        <dbReference type="Rhea" id="RHEA:18121"/>
        <dbReference type="ChEBI" id="CHEBI:15361"/>
        <dbReference type="ChEBI" id="CHEBI:15377"/>
        <dbReference type="ChEBI" id="CHEBI:28938"/>
        <dbReference type="ChEBI" id="CHEBI:29256"/>
        <dbReference type="ChEBI" id="CHEBI:58717"/>
        <dbReference type="EC" id="4.4.1.13"/>
    </reaction>
</comment>
<comment type="cofactor">
    <cofactor evidence="1">
        <name>pyridoxal 5'-phosphate</name>
        <dbReference type="ChEBI" id="CHEBI:597326"/>
    </cofactor>
</comment>
<comment type="pathway">
    <text evidence="1">Amino-acid biosynthesis; L-methionine biosynthesis via de novo pathway; L-homocysteine from L-cystathionine: step 1/1.</text>
</comment>
<comment type="subunit">
    <text evidence="1">Homotetramer.</text>
</comment>
<comment type="subcellular location">
    <subcellularLocation>
        <location evidence="1">Cytoplasm</location>
    </subcellularLocation>
</comment>
<comment type="similarity">
    <text evidence="2">Belongs to the trans-sulfuration enzymes family.</text>
</comment>
<organism>
    <name type="scientific">Salmonella typhimurium (strain LT2 / SGSC1412 / ATCC 700720)</name>
    <dbReference type="NCBI Taxonomy" id="99287"/>
    <lineage>
        <taxon>Bacteria</taxon>
        <taxon>Pseudomonadati</taxon>
        <taxon>Pseudomonadota</taxon>
        <taxon>Gammaproteobacteria</taxon>
        <taxon>Enterobacterales</taxon>
        <taxon>Enterobacteriaceae</taxon>
        <taxon>Salmonella</taxon>
    </lineage>
</organism>
<keyword id="KW-0028">Amino-acid biosynthesis</keyword>
<keyword id="KW-0963">Cytoplasm</keyword>
<keyword id="KW-0456">Lyase</keyword>
<keyword id="KW-0486">Methionine biosynthesis</keyword>
<keyword id="KW-0663">Pyridoxal phosphate</keyword>
<keyword id="KW-1185">Reference proteome</keyword>
<name>METC_SALTY</name>
<proteinExistence type="inferred from homology"/>
<protein>
    <recommendedName>
        <fullName>Cystathionine beta-lyase</fullName>
        <shortName>CBL</shortName>
        <ecNumber evidence="1">4.4.1.13</ecNumber>
    </recommendedName>
    <alternativeName>
        <fullName>Beta-cystathionase</fullName>
    </alternativeName>
    <alternativeName>
        <fullName>Cysteine lyase</fullName>
    </alternativeName>
    <alternativeName>
        <fullName>Cysteine-S-conjugate beta-lyase</fullName>
    </alternativeName>
</protein>
<dbReference type="EC" id="4.4.1.13" evidence="1"/>
<dbReference type="EMBL" id="AE006468">
    <property type="protein sequence ID" value="AAL22035.1"/>
    <property type="molecule type" value="Genomic_DNA"/>
</dbReference>
<dbReference type="PIR" id="JV0020">
    <property type="entry name" value="JV0020"/>
</dbReference>
<dbReference type="RefSeq" id="NP_462076.1">
    <property type="nucleotide sequence ID" value="NC_003197.2"/>
</dbReference>
<dbReference type="RefSeq" id="WP_000130262.1">
    <property type="nucleotide sequence ID" value="NC_003197.2"/>
</dbReference>
<dbReference type="SMR" id="P18949"/>
<dbReference type="STRING" id="99287.STM3161"/>
<dbReference type="PaxDb" id="99287-STM3161"/>
<dbReference type="GeneID" id="1254684"/>
<dbReference type="KEGG" id="stm:STM3161"/>
<dbReference type="PATRIC" id="fig|99287.12.peg.3350"/>
<dbReference type="HOGENOM" id="CLU_018986_5_1_6"/>
<dbReference type="PhylomeDB" id="P18949"/>
<dbReference type="BioCyc" id="SENT99287:STM3161-MONOMER"/>
<dbReference type="UniPathway" id="UPA00051">
    <property type="reaction ID" value="UER00078"/>
</dbReference>
<dbReference type="Proteomes" id="UP000001014">
    <property type="component" value="Chromosome"/>
</dbReference>
<dbReference type="GO" id="GO:0005737">
    <property type="term" value="C:cytoplasm"/>
    <property type="evidence" value="ECO:0007669"/>
    <property type="project" value="UniProtKB-SubCell"/>
</dbReference>
<dbReference type="GO" id="GO:0047804">
    <property type="term" value="F:cysteine-S-conjugate beta-lyase activity"/>
    <property type="evidence" value="ECO:0000318"/>
    <property type="project" value="GO_Central"/>
</dbReference>
<dbReference type="GO" id="GO:0030170">
    <property type="term" value="F:pyridoxal phosphate binding"/>
    <property type="evidence" value="ECO:0007669"/>
    <property type="project" value="InterPro"/>
</dbReference>
<dbReference type="GO" id="GO:0019450">
    <property type="term" value="P:L-cysteine catabolic process to pyruvate"/>
    <property type="evidence" value="ECO:0000318"/>
    <property type="project" value="GO_Central"/>
</dbReference>
<dbReference type="GO" id="GO:0009086">
    <property type="term" value="P:methionine biosynthetic process"/>
    <property type="evidence" value="ECO:0007669"/>
    <property type="project" value="UniProtKB-KW"/>
</dbReference>
<dbReference type="GO" id="GO:0019346">
    <property type="term" value="P:transsulfuration"/>
    <property type="evidence" value="ECO:0007669"/>
    <property type="project" value="InterPro"/>
</dbReference>
<dbReference type="CDD" id="cd00614">
    <property type="entry name" value="CGS_like"/>
    <property type="match status" value="1"/>
</dbReference>
<dbReference type="FunFam" id="3.40.640.10:FF:000062">
    <property type="entry name" value="Cystathionine beta-lyase"/>
    <property type="match status" value="1"/>
</dbReference>
<dbReference type="FunFam" id="3.90.1150.10:FF:000058">
    <property type="entry name" value="Cystathionine beta-lyase"/>
    <property type="match status" value="1"/>
</dbReference>
<dbReference type="Gene3D" id="3.90.1150.10">
    <property type="entry name" value="Aspartate Aminotransferase, domain 1"/>
    <property type="match status" value="1"/>
</dbReference>
<dbReference type="Gene3D" id="3.40.640.10">
    <property type="entry name" value="Type I PLP-dependent aspartate aminotransferase-like (Major domain)"/>
    <property type="match status" value="1"/>
</dbReference>
<dbReference type="InterPro" id="IPR000277">
    <property type="entry name" value="Cys/Met-Metab_PyrdxlP-dep_enz"/>
</dbReference>
<dbReference type="InterPro" id="IPR006233">
    <property type="entry name" value="Cys_b_lyase_bac"/>
</dbReference>
<dbReference type="InterPro" id="IPR054542">
    <property type="entry name" value="Cys_met_metab_PP"/>
</dbReference>
<dbReference type="InterPro" id="IPR015424">
    <property type="entry name" value="PyrdxlP-dep_Trfase"/>
</dbReference>
<dbReference type="InterPro" id="IPR015421">
    <property type="entry name" value="PyrdxlP-dep_Trfase_major"/>
</dbReference>
<dbReference type="InterPro" id="IPR015422">
    <property type="entry name" value="PyrdxlP-dep_Trfase_small"/>
</dbReference>
<dbReference type="NCBIfam" id="TIGR01324">
    <property type="entry name" value="cysta_beta_ly_B"/>
    <property type="match status" value="1"/>
</dbReference>
<dbReference type="NCBIfam" id="NF005990">
    <property type="entry name" value="PRK08114.1"/>
    <property type="match status" value="1"/>
</dbReference>
<dbReference type="PANTHER" id="PTHR43500">
    <property type="entry name" value="CYSTATHIONINE BETA-LYASE-RELATED"/>
    <property type="match status" value="1"/>
</dbReference>
<dbReference type="PANTHER" id="PTHR43500:SF1">
    <property type="entry name" value="CYSTATHIONINE BETA-LYASE-RELATED"/>
    <property type="match status" value="1"/>
</dbReference>
<dbReference type="Pfam" id="PF01053">
    <property type="entry name" value="Cys_Met_Meta_PP"/>
    <property type="match status" value="1"/>
</dbReference>
<dbReference type="PIRSF" id="PIRSF001434">
    <property type="entry name" value="CGS"/>
    <property type="match status" value="1"/>
</dbReference>
<dbReference type="SUPFAM" id="SSF53383">
    <property type="entry name" value="PLP-dependent transferases"/>
    <property type="match status" value="1"/>
</dbReference>
<dbReference type="PROSITE" id="PS00868">
    <property type="entry name" value="CYS_MET_METAB_PP"/>
    <property type="match status" value="1"/>
</dbReference>
<sequence length="395" mass="42872">MTDKQLDTKLVNAGRSKKYTLGSVNSVIQRASSLVFDTVEAKKHATRNLANGELFYGRRGTLTHFSLQEAMCELEGGAGCALFPCGAAAVANTILAFVEQGDHILMTNTAYEPSQDFCSKILGKLGVTTSWFDPLIGADITQHIQPNTKVVFLESPGSITMEVHDIPSIVSAVRRVAPEAVIMIDNTWAAGVLFKALEFDIDISIQAGTKYLIGHSDAMVGTAVANARCWEQLRENAYLMGQMLDADTAYMTSRGLRTLGVRLRQHQESSLKIAAWLANHPQVARVNHPALPGSKGHAFWKRDFTGSSGLFSFVLNKKLTEAELSAYLDNFSLFSMAYSWGGYESLIIANQPEQIAAIRPAGGVDFTGTLVRVHIGLESVDDLIADLAAGFARIV</sequence>
<gene>
    <name type="primary">metC</name>
    <name type="ordered locus">STM3161</name>
</gene>
<evidence type="ECO:0000250" key="1">
    <source>
        <dbReference type="UniProtKB" id="P06721"/>
    </source>
</evidence>
<evidence type="ECO:0000305" key="2"/>
<accession>P18949</accession>
<reference key="1">
    <citation type="journal article" date="1989" name="Mol. Gen. Genet.">
        <title>DNA sequence of the metC gene and its flanking regions from Salmonella typhimurium LT2 and homology with the corresponding sequence of Escherichia coli.</title>
        <authorList>
            <person name="Park Y.M."/>
            <person name="Stauffer G.V."/>
        </authorList>
    </citation>
    <scope>NUCLEOTIDE SEQUENCE [GENOMIC DNA]</scope>
    <source>
        <strain>LT2</strain>
    </source>
</reference>
<reference key="2">
    <citation type="journal article" date="2001" name="Nature">
        <title>Complete genome sequence of Salmonella enterica serovar Typhimurium LT2.</title>
        <authorList>
            <person name="McClelland M."/>
            <person name="Sanderson K.E."/>
            <person name="Spieth J."/>
            <person name="Clifton S.W."/>
            <person name="Latreille P."/>
            <person name="Courtney L."/>
            <person name="Porwollik S."/>
            <person name="Ali J."/>
            <person name="Dante M."/>
            <person name="Du F."/>
            <person name="Hou S."/>
            <person name="Layman D."/>
            <person name="Leonard S."/>
            <person name="Nguyen C."/>
            <person name="Scott K."/>
            <person name="Holmes A."/>
            <person name="Grewal N."/>
            <person name="Mulvaney E."/>
            <person name="Ryan E."/>
            <person name="Sun H."/>
            <person name="Florea L."/>
            <person name="Miller W."/>
            <person name="Stoneking T."/>
            <person name="Nhan M."/>
            <person name="Waterston R."/>
            <person name="Wilson R.K."/>
        </authorList>
    </citation>
    <scope>NUCLEOTIDE SEQUENCE [LARGE SCALE GENOMIC DNA]</scope>
    <source>
        <strain>LT2 / SGSC1412 / ATCC 700720</strain>
    </source>
</reference>
<feature type="chain" id="PRO_0000114769" description="Cystathionine beta-lyase">
    <location>
        <begin position="1"/>
        <end position="395"/>
    </location>
</feature>
<feature type="modified residue" description="N6-(pyridoxal phosphate)lysine" evidence="1">
    <location>
        <position position="210"/>
    </location>
</feature>
<feature type="sequence conflict" description="In Ref. 1." evidence="2" ref="1">
    <original>K</original>
    <variation>E</variation>
    <location>
        <position position="195"/>
    </location>
</feature>
<feature type="sequence conflict" description="In Ref. 1." evidence="2" ref="1">
    <original>D</original>
    <variation>H</variation>
    <location>
        <position position="200"/>
    </location>
</feature>